<comment type="subunit">
    <text evidence="3">Homotetramer.</text>
</comment>
<comment type="subcellular location">
    <subcellularLocation>
        <location>Cytoplasm</location>
    </subcellularLocation>
</comment>
<comment type="miscellaneous">
    <text>This molluscan globin lacks one of the heme-binding histidine residues found in most other globins.</text>
</comment>
<comment type="similarity">
    <text evidence="1">Belongs to the globin family.</text>
</comment>
<sequence length="151" mass="17011">MTTLTNPQKAAIRSSWSKFMDNGVSNGQGFYMDLFKAHPETLTPFKSLFGGLTLAQLQDNPKMKAQSLVFCNGMSSFVDHLDDNMLVVLIQKMAKLHNNRGIRASDLRTAYDILIHYMEDHNHMVGGAKDAWEVFVGFICKTLGDYMKELS</sequence>
<proteinExistence type="evidence at protein level"/>
<accession>P41261</accession>
<feature type="initiator methionine" description="Removed" evidence="2">
    <location>
        <position position="1"/>
    </location>
</feature>
<feature type="chain" id="PRO_0000052493" description="Hemoglobin-2">
    <location>
        <begin position="2"/>
        <end position="151"/>
    </location>
</feature>
<feature type="domain" description="Globin" evidence="1">
    <location>
        <begin position="3"/>
        <end position="148"/>
    </location>
</feature>
<feature type="binding site" description="proximal binding residue">
    <location>
        <position position="97"/>
    </location>
    <ligand>
        <name>heme b</name>
        <dbReference type="ChEBI" id="CHEBI:60344"/>
    </ligand>
    <ligandPart>
        <name>Fe</name>
        <dbReference type="ChEBI" id="CHEBI:18248"/>
    </ligandPart>
</feature>
<feature type="modified residue" description="N-acetylthreonine" evidence="2">
    <location>
        <position position="2"/>
    </location>
</feature>
<feature type="helix" evidence="4">
    <location>
        <begin position="6"/>
        <end position="20"/>
    </location>
</feature>
<feature type="helix" evidence="4">
    <location>
        <begin position="23"/>
        <end position="37"/>
    </location>
</feature>
<feature type="helix" evidence="4">
    <location>
        <begin position="39"/>
        <end position="45"/>
    </location>
</feature>
<feature type="helix" evidence="4">
    <location>
        <begin position="46"/>
        <end position="49"/>
    </location>
</feature>
<feature type="helix" evidence="4">
    <location>
        <begin position="54"/>
        <end position="57"/>
    </location>
</feature>
<feature type="helix" evidence="4">
    <location>
        <begin position="61"/>
        <end position="78"/>
    </location>
</feature>
<feature type="turn" evidence="4">
    <location>
        <begin position="79"/>
        <end position="82"/>
    </location>
</feature>
<feature type="helix" evidence="4">
    <location>
        <begin position="84"/>
        <end position="98"/>
    </location>
</feature>
<feature type="turn" evidence="4">
    <location>
        <begin position="99"/>
        <end position="101"/>
    </location>
</feature>
<feature type="helix" evidence="4">
    <location>
        <begin position="104"/>
        <end position="120"/>
    </location>
</feature>
<feature type="helix" evidence="4">
    <location>
        <begin position="128"/>
        <end position="149"/>
    </location>
</feature>
<protein>
    <recommendedName>
        <fullName>Hemoglobin-2</fullName>
    </recommendedName>
    <alternativeName>
        <fullName>Hemoglobin II</fullName>
        <shortName>Hb II</shortName>
        <shortName>HbII</shortName>
    </alternativeName>
</protein>
<dbReference type="PIR" id="A61437">
    <property type="entry name" value="A61437"/>
</dbReference>
<dbReference type="PDB" id="2OLP">
    <property type="method" value="X-ray"/>
    <property type="resolution" value="1.93 A"/>
    <property type="chains" value="A/B=2-151"/>
</dbReference>
<dbReference type="PDB" id="3PI1">
    <property type="method" value="X-ray"/>
    <property type="resolution" value="2.00 A"/>
    <property type="chains" value="A/B=2-151"/>
</dbReference>
<dbReference type="PDB" id="3PI2">
    <property type="method" value="X-ray"/>
    <property type="resolution" value="1.85 A"/>
    <property type="chains" value="A/B=2-151"/>
</dbReference>
<dbReference type="PDB" id="3PI3">
    <property type="method" value="X-ray"/>
    <property type="resolution" value="1.95 A"/>
    <property type="chains" value="A/B=2-151"/>
</dbReference>
<dbReference type="PDB" id="3PI4">
    <property type="method" value="X-ray"/>
    <property type="resolution" value="3.17 A"/>
    <property type="chains" value="A/B=2-151"/>
</dbReference>
<dbReference type="PDB" id="3PT7">
    <property type="method" value="X-ray"/>
    <property type="resolution" value="2.15 A"/>
    <property type="chains" value="A=2-151"/>
</dbReference>
<dbReference type="PDB" id="3PT8">
    <property type="method" value="X-ray"/>
    <property type="resolution" value="1.76 A"/>
    <property type="chains" value="A=2-151"/>
</dbReference>
<dbReference type="PDB" id="6OTW">
    <property type="method" value="X-ray"/>
    <property type="resolution" value="2.45 A"/>
    <property type="chains" value="A=1-151"/>
</dbReference>
<dbReference type="PDB" id="6OTX">
    <property type="method" value="X-ray"/>
    <property type="resolution" value="2.54 A"/>
    <property type="chains" value="A=1-151"/>
</dbReference>
<dbReference type="PDB" id="6OTY">
    <property type="method" value="X-ray"/>
    <property type="resolution" value="2.60 A"/>
    <property type="chains" value="A=1-151"/>
</dbReference>
<dbReference type="PDBsum" id="2OLP"/>
<dbReference type="PDBsum" id="3PI1"/>
<dbReference type="PDBsum" id="3PI2"/>
<dbReference type="PDBsum" id="3PI3"/>
<dbReference type="PDBsum" id="3PI4"/>
<dbReference type="PDBsum" id="3PT7"/>
<dbReference type="PDBsum" id="3PT8"/>
<dbReference type="PDBsum" id="6OTW"/>
<dbReference type="PDBsum" id="6OTX"/>
<dbReference type="PDBsum" id="6OTY"/>
<dbReference type="SMR" id="P41261"/>
<dbReference type="iPTMnet" id="P41261"/>
<dbReference type="EvolutionaryTrace" id="P41261"/>
<dbReference type="GO" id="GO:0005737">
    <property type="term" value="C:cytoplasm"/>
    <property type="evidence" value="ECO:0007669"/>
    <property type="project" value="UniProtKB-SubCell"/>
</dbReference>
<dbReference type="GO" id="GO:0020037">
    <property type="term" value="F:heme binding"/>
    <property type="evidence" value="ECO:0007669"/>
    <property type="project" value="InterPro"/>
</dbReference>
<dbReference type="GO" id="GO:0046872">
    <property type="term" value="F:metal ion binding"/>
    <property type="evidence" value="ECO:0007669"/>
    <property type="project" value="UniProtKB-KW"/>
</dbReference>
<dbReference type="GO" id="GO:0019825">
    <property type="term" value="F:oxygen binding"/>
    <property type="evidence" value="ECO:0007669"/>
    <property type="project" value="InterPro"/>
</dbReference>
<dbReference type="GO" id="GO:0005344">
    <property type="term" value="F:oxygen carrier activity"/>
    <property type="evidence" value="ECO:0007669"/>
    <property type="project" value="UniProtKB-KW"/>
</dbReference>
<dbReference type="CDD" id="cd01040">
    <property type="entry name" value="Mb-like"/>
    <property type="match status" value="1"/>
</dbReference>
<dbReference type="Gene3D" id="1.10.490.10">
    <property type="entry name" value="Globins"/>
    <property type="match status" value="1"/>
</dbReference>
<dbReference type="InterPro" id="IPR000971">
    <property type="entry name" value="Globin"/>
</dbReference>
<dbReference type="InterPro" id="IPR009050">
    <property type="entry name" value="Globin-like_sf"/>
</dbReference>
<dbReference type="InterPro" id="IPR012292">
    <property type="entry name" value="Globin/Proto"/>
</dbReference>
<dbReference type="InterPro" id="IPR044399">
    <property type="entry name" value="Mb-like_M"/>
</dbReference>
<dbReference type="PANTHER" id="PTHR47217">
    <property type="entry name" value="GLOBIN-LIKE PROTEIN"/>
    <property type="match status" value="1"/>
</dbReference>
<dbReference type="PANTHER" id="PTHR47217:SF1">
    <property type="entry name" value="GLOBIN-LIKE PROTEIN"/>
    <property type="match status" value="1"/>
</dbReference>
<dbReference type="Pfam" id="PF00042">
    <property type="entry name" value="Globin"/>
    <property type="match status" value="1"/>
</dbReference>
<dbReference type="SUPFAM" id="SSF46458">
    <property type="entry name" value="Globin-like"/>
    <property type="match status" value="1"/>
</dbReference>
<dbReference type="PROSITE" id="PS01033">
    <property type="entry name" value="GLOBIN"/>
    <property type="match status" value="1"/>
</dbReference>
<name>GLB2_PHAPT</name>
<organism>
    <name type="scientific">Phacoides pectinatus</name>
    <name type="common">Thick lucine</name>
    <name type="synonym">Lucina pectinata</name>
    <dbReference type="NCBI Taxonomy" id="244486"/>
    <lineage>
        <taxon>Eukaryota</taxon>
        <taxon>Metazoa</taxon>
        <taxon>Spiralia</taxon>
        <taxon>Lophotrochozoa</taxon>
        <taxon>Mollusca</taxon>
        <taxon>Bivalvia</taxon>
        <taxon>Autobranchia</taxon>
        <taxon>Heteroconchia</taxon>
        <taxon>Euheterodonta</taxon>
        <taxon>Imparidentia</taxon>
        <taxon>Lucinida</taxon>
        <taxon>Lucinoidea</taxon>
        <taxon>Lucinidae</taxon>
        <taxon>Phacoides</taxon>
    </lineage>
</organism>
<reference key="1">
    <citation type="journal article" date="1991" name="J. Protein Chem.">
        <title>The amino acid sequence of hemoglobin II from the symbiont-harboring clam Lucina pectinata.</title>
        <authorList>
            <person name="Hockenhull-Johnson J.D."/>
            <person name="Stern M.S."/>
            <person name="Martin P."/>
            <person name="Dass C."/>
            <person name="Desiderio D.M."/>
            <person name="Wittenberg J.B."/>
            <person name="Vinogradov S.N."/>
            <person name="Walz D.A."/>
        </authorList>
    </citation>
    <scope>PROTEIN SEQUENCE OF 2-151</scope>
    <scope>ACETYLATION AT THR-2</scope>
    <source>
        <tissue>Gill</tissue>
    </source>
</reference>
<reference key="2">
    <citation type="journal article" date="1990" name="J. Biol. Chem.">
        <title>Hemoglobins of the Lucina pectinata/bacteria symbiosis. I. Molecular properties, kinetics and equilibria of reactions with ligands.</title>
        <authorList>
            <person name="Kraus D.W."/>
            <person name="Wittenberg J.B."/>
        </authorList>
    </citation>
    <scope>CHARACTERIZATION</scope>
</reference>
<reference key="3">
    <citation type="journal article" date="2008" name="J. Biol. Chem.">
        <title>Structure and ligand selection of hemoglobin II from Lucina pectinata.</title>
        <authorList>
            <person name="Gavira J.A."/>
            <person name="Camara-Artigas A."/>
            <person name="De Jesus-Bonilla W."/>
            <person name="Lopez-Garriga J."/>
            <person name="Lewis A."/>
            <person name="Pietri R."/>
            <person name="Yeh S.R."/>
            <person name="Cadilla C.L."/>
            <person name="Garcia-Ruiz J.M."/>
        </authorList>
    </citation>
    <scope>X-RAY CRYSTALLOGRAPHY (1.93 ANGSTROMS) IN COMPLEX WITH HEME</scope>
</reference>
<evidence type="ECO:0000255" key="1">
    <source>
        <dbReference type="PROSITE-ProRule" id="PRU00238"/>
    </source>
</evidence>
<evidence type="ECO:0000269" key="2">
    <source>
    </source>
</evidence>
<evidence type="ECO:0000269" key="3">
    <source>
    </source>
</evidence>
<evidence type="ECO:0007829" key="4">
    <source>
        <dbReference type="PDB" id="3PT8"/>
    </source>
</evidence>
<keyword id="KW-0002">3D-structure</keyword>
<keyword id="KW-0007">Acetylation</keyword>
<keyword id="KW-0963">Cytoplasm</keyword>
<keyword id="KW-0903">Direct protein sequencing</keyword>
<keyword id="KW-0349">Heme</keyword>
<keyword id="KW-0408">Iron</keyword>
<keyword id="KW-0479">Metal-binding</keyword>
<keyword id="KW-0561">Oxygen transport</keyword>
<keyword id="KW-0813">Transport</keyword>